<reference key="1">
    <citation type="journal article" date="2010" name="J. Bacteriol.">
        <title>Whole genome sequences of two Xylella fastidiosa strains (M12 and M23) causing almond leaf scorch disease in California.</title>
        <authorList>
            <person name="Chen J."/>
            <person name="Xie G."/>
            <person name="Han S."/>
            <person name="Chertkov O."/>
            <person name="Sims D."/>
            <person name="Civerolo E.L."/>
        </authorList>
    </citation>
    <scope>NUCLEOTIDE SEQUENCE [LARGE SCALE GENOMIC DNA]</scope>
    <source>
        <strain>M12</strain>
    </source>
</reference>
<accession>B0U5X0</accession>
<keyword id="KW-0997">Cell inner membrane</keyword>
<keyword id="KW-1003">Cell membrane</keyword>
<keyword id="KW-0378">Hydrolase</keyword>
<keyword id="KW-0472">Membrane</keyword>
<keyword id="KW-0479">Metal-binding</keyword>
<keyword id="KW-0482">Metalloprotease</keyword>
<keyword id="KW-0645">Protease</keyword>
<keyword id="KW-0346">Stress response</keyword>
<keyword id="KW-0812">Transmembrane</keyword>
<keyword id="KW-1133">Transmembrane helix</keyword>
<keyword id="KW-0862">Zinc</keyword>
<protein>
    <recommendedName>
        <fullName evidence="1">Protease HtpX</fullName>
        <ecNumber evidence="1">3.4.24.-</ecNumber>
    </recommendedName>
    <alternativeName>
        <fullName evidence="1">Heat shock protein HtpX</fullName>
    </alternativeName>
</protein>
<dbReference type="EC" id="3.4.24.-" evidence="1"/>
<dbReference type="EMBL" id="CP000941">
    <property type="protein sequence ID" value="ACA13042.1"/>
    <property type="molecule type" value="Genomic_DNA"/>
</dbReference>
<dbReference type="RefSeq" id="WP_004084683.1">
    <property type="nucleotide sequence ID" value="NC_010513.1"/>
</dbReference>
<dbReference type="SMR" id="B0U5X0"/>
<dbReference type="MEROPS" id="M48.002"/>
<dbReference type="KEGG" id="xfm:Xfasm12_2189"/>
<dbReference type="HOGENOM" id="CLU_042266_1_0_6"/>
<dbReference type="GO" id="GO:0005886">
    <property type="term" value="C:plasma membrane"/>
    <property type="evidence" value="ECO:0007669"/>
    <property type="project" value="UniProtKB-SubCell"/>
</dbReference>
<dbReference type="GO" id="GO:0004222">
    <property type="term" value="F:metalloendopeptidase activity"/>
    <property type="evidence" value="ECO:0007669"/>
    <property type="project" value="UniProtKB-UniRule"/>
</dbReference>
<dbReference type="GO" id="GO:0008270">
    <property type="term" value="F:zinc ion binding"/>
    <property type="evidence" value="ECO:0007669"/>
    <property type="project" value="UniProtKB-UniRule"/>
</dbReference>
<dbReference type="GO" id="GO:0006508">
    <property type="term" value="P:proteolysis"/>
    <property type="evidence" value="ECO:0007669"/>
    <property type="project" value="UniProtKB-KW"/>
</dbReference>
<dbReference type="CDD" id="cd07335">
    <property type="entry name" value="M48B_HtpX_like"/>
    <property type="match status" value="1"/>
</dbReference>
<dbReference type="Gene3D" id="3.30.2010.10">
    <property type="entry name" value="Metalloproteases ('zincins'), catalytic domain"/>
    <property type="match status" value="1"/>
</dbReference>
<dbReference type="HAMAP" id="MF_00188">
    <property type="entry name" value="Pept_M48_protease_HtpX"/>
    <property type="match status" value="1"/>
</dbReference>
<dbReference type="InterPro" id="IPR050083">
    <property type="entry name" value="HtpX_protease"/>
</dbReference>
<dbReference type="InterPro" id="IPR022919">
    <property type="entry name" value="Pept_M48_protease_HtpX"/>
</dbReference>
<dbReference type="InterPro" id="IPR001915">
    <property type="entry name" value="Peptidase_M48"/>
</dbReference>
<dbReference type="NCBIfam" id="NF003965">
    <property type="entry name" value="PRK05457.1"/>
    <property type="match status" value="1"/>
</dbReference>
<dbReference type="PANTHER" id="PTHR43221">
    <property type="entry name" value="PROTEASE HTPX"/>
    <property type="match status" value="1"/>
</dbReference>
<dbReference type="PANTHER" id="PTHR43221:SF1">
    <property type="entry name" value="PROTEASE HTPX"/>
    <property type="match status" value="1"/>
</dbReference>
<dbReference type="Pfam" id="PF01435">
    <property type="entry name" value="Peptidase_M48"/>
    <property type="match status" value="1"/>
</dbReference>
<sequence>MLTRIVLFAITNLAVLILASIVMSLLGVNPTQMSGLLVMALILGFGGSLISLLMSKAIAKHTTGAYVIEQPRNPSQRWLLDTVRRQAEIVGIGMPEVAIYEGPEINAFATGADRNNALVAVSTGLLQNMSQDEAEAVLGHEIAHVANGDMVTMALLQGVLNTFVIVLARVVGGFIDSLLSGNRGSGRGVAYYGIVLVLELLFGLFATIITMWFSRRREFRADEGGAYLAGRNKMIAALERLGINHGQSTLPTQVQAFGIYGGIGEGLRKLFLSHPPLSERIAALRMARE</sequence>
<proteinExistence type="inferred from homology"/>
<feature type="chain" id="PRO_1000098862" description="Protease HtpX">
    <location>
        <begin position="1"/>
        <end position="289"/>
    </location>
</feature>
<feature type="transmembrane region" description="Helical" evidence="1">
    <location>
        <begin position="5"/>
        <end position="25"/>
    </location>
</feature>
<feature type="transmembrane region" description="Helical" evidence="1">
    <location>
        <begin position="33"/>
        <end position="53"/>
    </location>
</feature>
<feature type="transmembrane region" description="Helical" evidence="1">
    <location>
        <begin position="155"/>
        <end position="175"/>
    </location>
</feature>
<feature type="transmembrane region" description="Helical" evidence="1">
    <location>
        <begin position="193"/>
        <end position="213"/>
    </location>
</feature>
<feature type="active site" evidence="1">
    <location>
        <position position="141"/>
    </location>
</feature>
<feature type="binding site" evidence="1">
    <location>
        <position position="140"/>
    </location>
    <ligand>
        <name>Zn(2+)</name>
        <dbReference type="ChEBI" id="CHEBI:29105"/>
        <note>catalytic</note>
    </ligand>
</feature>
<feature type="binding site" evidence="1">
    <location>
        <position position="144"/>
    </location>
    <ligand>
        <name>Zn(2+)</name>
        <dbReference type="ChEBI" id="CHEBI:29105"/>
        <note>catalytic</note>
    </ligand>
</feature>
<feature type="binding site" evidence="1">
    <location>
        <position position="218"/>
    </location>
    <ligand>
        <name>Zn(2+)</name>
        <dbReference type="ChEBI" id="CHEBI:29105"/>
        <note>catalytic</note>
    </ligand>
</feature>
<evidence type="ECO:0000255" key="1">
    <source>
        <dbReference type="HAMAP-Rule" id="MF_00188"/>
    </source>
</evidence>
<name>HTPX_XYLFM</name>
<gene>
    <name evidence="1" type="primary">htpX</name>
    <name type="ordered locus">Xfasm12_2189</name>
</gene>
<organism>
    <name type="scientific">Xylella fastidiosa (strain M12)</name>
    <dbReference type="NCBI Taxonomy" id="405440"/>
    <lineage>
        <taxon>Bacteria</taxon>
        <taxon>Pseudomonadati</taxon>
        <taxon>Pseudomonadota</taxon>
        <taxon>Gammaproteobacteria</taxon>
        <taxon>Lysobacterales</taxon>
        <taxon>Lysobacteraceae</taxon>
        <taxon>Xylella</taxon>
    </lineage>
</organism>
<comment type="cofactor">
    <cofactor evidence="1">
        <name>Zn(2+)</name>
        <dbReference type="ChEBI" id="CHEBI:29105"/>
    </cofactor>
    <text evidence="1">Binds 1 zinc ion per subunit.</text>
</comment>
<comment type="subcellular location">
    <subcellularLocation>
        <location evidence="1">Cell inner membrane</location>
        <topology evidence="1">Multi-pass membrane protein</topology>
    </subcellularLocation>
</comment>
<comment type="similarity">
    <text evidence="1">Belongs to the peptidase M48B family.</text>
</comment>